<evidence type="ECO:0000250" key="1"/>
<evidence type="ECO:0000250" key="2">
    <source>
        <dbReference type="UniProtKB" id="B6D434"/>
    </source>
</evidence>
<evidence type="ECO:0000250" key="3">
    <source>
        <dbReference type="UniProtKB" id="U5KJC9"/>
    </source>
</evidence>
<evidence type="ECO:0000255" key="4"/>
<evidence type="ECO:0000256" key="5">
    <source>
        <dbReference type="SAM" id="MobiDB-lite"/>
    </source>
</evidence>
<evidence type="ECO:0000303" key="6">
    <source>
    </source>
</evidence>
<evidence type="ECO:0000305" key="7"/>
<evidence type="ECO:0000305" key="8">
    <source>
    </source>
</evidence>
<sequence>MQGFFWKTLLVVALCGTSSSLAHRPLSYGEALELALSVYNSKAGEESLFRLLEAVPQPEWDPLSEGSQQLNFTIKETVCQVEEERPLEECGFQEDGVVLECTGYYFFGETPPVVVLTCVPVGGVEEEEEDEEEQKAEVEKDEEKEDEEKDRPKRVKRFKKFFKKLKNNVKKRVKKFFRKPRVIGVTIPF</sequence>
<comment type="function">
    <text evidence="3">Potent antimicrobial peptide against Gram-negative and Gram-positive bacteria. Adopts an amphipathic alpha helical conformation, that may allow to partition into the target membrane. Low hemolytic activities have been observed on mammalian cells.</text>
</comment>
<comment type="subcellular location">
    <subcellularLocation>
        <location evidence="2">Secreted</location>
    </subcellularLocation>
    <subcellularLocation>
        <location evidence="2">Target cell membrane</location>
    </subcellularLocation>
    <text evidence="2">Forms a helical membrane channel in the prey.</text>
</comment>
<comment type="tissue specificity">
    <text evidence="8">Expressed by the venom gland.</text>
</comment>
<comment type="miscellaneous">
    <text evidence="8">The putative mature sequence has been predicted by AMPA, a predictive algorithm for identification of peptide stretches with antimicrobial properties.</text>
</comment>
<comment type="similarity">
    <text evidence="7">Belongs to the cathelicidin family.</text>
</comment>
<keyword id="KW-0044">Antibiotic</keyword>
<keyword id="KW-0929">Antimicrobial</keyword>
<keyword id="KW-0165">Cleavage on pair of basic residues</keyword>
<keyword id="KW-1015">Disulfide bond</keyword>
<keyword id="KW-0472">Membrane</keyword>
<keyword id="KW-0964">Secreted</keyword>
<keyword id="KW-0732">Signal</keyword>
<keyword id="KW-1052">Target cell membrane</keyword>
<keyword id="KW-1053">Target membrane</keyword>
<dbReference type="EMBL" id="JX948112">
    <property type="protein sequence ID" value="AGS36141.1"/>
    <property type="molecule type" value="mRNA"/>
</dbReference>
<dbReference type="SMR" id="U5KJT7"/>
<dbReference type="GO" id="GO:0005615">
    <property type="term" value="C:extracellular space"/>
    <property type="evidence" value="ECO:0007669"/>
    <property type="project" value="TreeGrafter"/>
</dbReference>
<dbReference type="GO" id="GO:0016020">
    <property type="term" value="C:membrane"/>
    <property type="evidence" value="ECO:0007669"/>
    <property type="project" value="UniProtKB-KW"/>
</dbReference>
<dbReference type="GO" id="GO:0044218">
    <property type="term" value="C:other organism cell membrane"/>
    <property type="evidence" value="ECO:0007669"/>
    <property type="project" value="UniProtKB-KW"/>
</dbReference>
<dbReference type="GO" id="GO:0042742">
    <property type="term" value="P:defense response to bacterium"/>
    <property type="evidence" value="ECO:0007669"/>
    <property type="project" value="UniProtKB-KW"/>
</dbReference>
<dbReference type="FunFam" id="3.10.450.10:FF:000034">
    <property type="entry name" value="Cathelicidin-related peptide Oh-Cath"/>
    <property type="match status" value="1"/>
</dbReference>
<dbReference type="Gene3D" id="3.10.450.10">
    <property type="match status" value="1"/>
</dbReference>
<dbReference type="InterPro" id="IPR001894">
    <property type="entry name" value="Cathelicidin-like"/>
</dbReference>
<dbReference type="InterPro" id="IPR046350">
    <property type="entry name" value="Cystatin_sf"/>
</dbReference>
<dbReference type="PANTHER" id="PTHR10206">
    <property type="entry name" value="CATHELICIDIN"/>
    <property type="match status" value="1"/>
</dbReference>
<dbReference type="PANTHER" id="PTHR10206:SF4">
    <property type="entry name" value="NEUTROPHILIC GRANULE PROTEIN"/>
    <property type="match status" value="1"/>
</dbReference>
<dbReference type="Pfam" id="PF00666">
    <property type="entry name" value="Cathelicidins"/>
    <property type="match status" value="1"/>
</dbReference>
<dbReference type="SUPFAM" id="SSF54403">
    <property type="entry name" value="Cystatin/monellin"/>
    <property type="match status" value="1"/>
</dbReference>
<accession>U5KJT7</accession>
<feature type="signal peptide" evidence="4">
    <location>
        <begin position="1"/>
        <end position="22"/>
    </location>
</feature>
<feature type="propeptide" id="PRO_0000432325" evidence="8">
    <location>
        <begin position="23"/>
        <end position="155"/>
    </location>
</feature>
<feature type="peptide" id="PRO_0000432326" description="Lutzicidin" evidence="8">
    <location>
        <begin position="156"/>
        <end position="189"/>
    </location>
</feature>
<feature type="region of interest" description="Disordered" evidence="5">
    <location>
        <begin position="125"/>
        <end position="152"/>
    </location>
</feature>
<feature type="compositionally biased region" description="Acidic residues" evidence="5">
    <location>
        <begin position="125"/>
        <end position="148"/>
    </location>
</feature>
<feature type="disulfide bond" evidence="1">
    <location>
        <begin position="79"/>
        <end position="90"/>
    </location>
</feature>
<feature type="disulfide bond" evidence="1">
    <location>
        <begin position="101"/>
        <end position="118"/>
    </location>
</feature>
<organism>
    <name type="scientific">Bothrops lutzi</name>
    <name type="common">Sertao lancehead</name>
    <name type="synonym">Bothrops iglesiasi</name>
    <dbReference type="NCBI Taxonomy" id="1368281"/>
    <lineage>
        <taxon>Eukaryota</taxon>
        <taxon>Metazoa</taxon>
        <taxon>Chordata</taxon>
        <taxon>Craniata</taxon>
        <taxon>Vertebrata</taxon>
        <taxon>Euteleostomi</taxon>
        <taxon>Lepidosauria</taxon>
        <taxon>Squamata</taxon>
        <taxon>Bifurcata</taxon>
        <taxon>Unidentata</taxon>
        <taxon>Episquamata</taxon>
        <taxon>Toxicofera</taxon>
        <taxon>Serpentes</taxon>
        <taxon>Colubroidea</taxon>
        <taxon>Viperidae</taxon>
        <taxon>Crotalinae</taxon>
        <taxon>Bothrops</taxon>
    </lineage>
</organism>
<reference key="1">
    <citation type="journal article" date="2014" name="Amino Acids">
        <title>Vipericidins: a novel family of cathelicidin-related peptides from the venom gland of South American pit vipers.</title>
        <authorList>
            <person name="Falcao C.B."/>
            <person name="de La Torre B.G."/>
            <person name="Perez-Peinado C."/>
            <person name="Barron A.E."/>
            <person name="Andreu D."/>
            <person name="Radis-Baptista G."/>
        </authorList>
    </citation>
    <scope>NUCLEOTIDE SEQUENCE [MRNA]</scope>
    <source>
        <tissue>Venom gland</tissue>
    </source>
</reference>
<protein>
    <recommendedName>
        <fullName evidence="6">Lutzicidin</fullName>
    </recommendedName>
    <alternativeName>
        <fullName evidence="6">Cathelicidin-related antimicrobial peptide</fullName>
        <shortName evidence="6">CRAMP</shortName>
    </alternativeName>
    <alternativeName>
        <fullName evidence="6">Vipericidin</fullName>
    </alternativeName>
</protein>
<name>CAMP_BOTLT</name>
<proteinExistence type="evidence at transcript level"/>